<dbReference type="EC" id="2.7.7.6" evidence="6 7"/>
<dbReference type="EC" id="3.1.13.-" evidence="3 12"/>
<dbReference type="EC" id="2.7.7.48" evidence="3"/>
<dbReference type="RefSeq" id="NP_001193242.1">
    <property type="nucleotide sequence ID" value="NM_001206313.2"/>
</dbReference>
<dbReference type="RefSeq" id="XP_024835398.1">
    <property type="nucleotide sequence ID" value="XM_024979630.2"/>
</dbReference>
<dbReference type="PDB" id="5FLM">
    <property type="method" value="EM"/>
    <property type="resolution" value="3.40 A"/>
    <property type="chains" value="A=1-1970"/>
</dbReference>
<dbReference type="PDB" id="5OIK">
    <property type="method" value="EM"/>
    <property type="resolution" value="3.70 A"/>
    <property type="chains" value="A=1-1970"/>
</dbReference>
<dbReference type="PDBsum" id="5FLM"/>
<dbReference type="PDBsum" id="5OIK"/>
<dbReference type="EMDB" id="EMD-3817"/>
<dbReference type="SMR" id="G3MZY8"/>
<dbReference type="DIP" id="DIP-61187N"/>
<dbReference type="FunCoup" id="G3MZY8">
    <property type="interactions" value="3232"/>
</dbReference>
<dbReference type="IntAct" id="G3MZY8">
    <property type="interactions" value="15"/>
</dbReference>
<dbReference type="STRING" id="9913.ENSBTAP00000055142"/>
<dbReference type="PaxDb" id="9913-ENSBTAP00000055142"/>
<dbReference type="Ensembl" id="ENSBTAT00000069267.2">
    <property type="protein sequence ID" value="ENSBTAP00000065848.1"/>
    <property type="gene ID" value="ENSBTAG00000046765.3"/>
</dbReference>
<dbReference type="GeneID" id="282312"/>
<dbReference type="KEGG" id="bta:282312"/>
<dbReference type="CTD" id="5430"/>
<dbReference type="VEuPathDB" id="HostDB:ENSBTAG00000046765"/>
<dbReference type="VGNC" id="VGNC:33135">
    <property type="gene designation" value="POLR2A"/>
</dbReference>
<dbReference type="eggNOG" id="KOG0260">
    <property type="taxonomic scope" value="Eukaryota"/>
</dbReference>
<dbReference type="GeneTree" id="ENSGT00930000151033"/>
<dbReference type="HOGENOM" id="CLU_000487_0_1_1"/>
<dbReference type="OMA" id="KPCMGIV"/>
<dbReference type="OrthoDB" id="270392at2759"/>
<dbReference type="TreeFam" id="TF103036"/>
<dbReference type="Reactome" id="R-BTA-112382">
    <property type="pathway name" value="Formation of RNA Pol II elongation complex"/>
</dbReference>
<dbReference type="Reactome" id="R-BTA-113418">
    <property type="pathway name" value="Formation of the Early Elongation Complex"/>
</dbReference>
<dbReference type="Reactome" id="R-BTA-5578749">
    <property type="pathway name" value="Transcriptional regulation by small RNAs"/>
</dbReference>
<dbReference type="Reactome" id="R-BTA-674695">
    <property type="pathway name" value="RNA Polymerase II Pre-transcription Events"/>
</dbReference>
<dbReference type="Reactome" id="R-BTA-6781823">
    <property type="pathway name" value="Formation of TC-NER Pre-Incision Complex"/>
</dbReference>
<dbReference type="Reactome" id="R-BTA-6782135">
    <property type="pathway name" value="Dual incision in TC-NER"/>
</dbReference>
<dbReference type="Reactome" id="R-BTA-6782210">
    <property type="pathway name" value="Gap-filling DNA repair synthesis and ligation in TC-NER"/>
</dbReference>
<dbReference type="Reactome" id="R-BTA-6796648">
    <property type="pathway name" value="TP53 Regulates Transcription of DNA Repair Genes"/>
</dbReference>
<dbReference type="Reactome" id="R-BTA-6803529">
    <property type="pathway name" value="FGFR2 alternative splicing"/>
</dbReference>
<dbReference type="Reactome" id="R-BTA-6807505">
    <property type="pathway name" value="RNA polymerase II transcribes snRNA genes"/>
</dbReference>
<dbReference type="Reactome" id="R-BTA-72086">
    <property type="pathway name" value="mRNA Capping"/>
</dbReference>
<dbReference type="Reactome" id="R-BTA-72163">
    <property type="pathway name" value="mRNA Splicing - Major Pathway"/>
</dbReference>
<dbReference type="Reactome" id="R-BTA-72165">
    <property type="pathway name" value="mRNA Splicing - Minor Pathway"/>
</dbReference>
<dbReference type="Reactome" id="R-BTA-72203">
    <property type="pathway name" value="Processing of Capped Intron-Containing Pre-mRNA"/>
</dbReference>
<dbReference type="Reactome" id="R-BTA-73776">
    <property type="pathway name" value="RNA Polymerase II Promoter Escape"/>
</dbReference>
<dbReference type="Reactome" id="R-BTA-73779">
    <property type="pathway name" value="RNA Polymerase II Transcription Pre-Initiation And Promoter Opening"/>
</dbReference>
<dbReference type="Reactome" id="R-BTA-75953">
    <property type="pathway name" value="RNA Polymerase II Transcription Initiation"/>
</dbReference>
<dbReference type="Reactome" id="R-BTA-75955">
    <property type="pathway name" value="RNA Polymerase II Transcription Elongation"/>
</dbReference>
<dbReference type="Reactome" id="R-BTA-76042">
    <property type="pathway name" value="RNA Polymerase II Transcription Initiation And Promoter Clearance"/>
</dbReference>
<dbReference type="Reactome" id="R-BTA-77075">
    <property type="pathway name" value="RNA Pol II CTD phosphorylation and interaction with CE"/>
</dbReference>
<dbReference type="Reactome" id="R-BTA-9018519">
    <property type="pathway name" value="Estrogen-dependent gene expression"/>
</dbReference>
<dbReference type="EvolutionaryTrace" id="G3MZY8"/>
<dbReference type="Proteomes" id="UP000009136">
    <property type="component" value="Chromosome 19"/>
</dbReference>
<dbReference type="Bgee" id="ENSBTAG00000046765">
    <property type="expression patterns" value="Expressed in spermatocyte and 105 other cell types or tissues"/>
</dbReference>
<dbReference type="GO" id="GO:0000791">
    <property type="term" value="C:euchromatin"/>
    <property type="evidence" value="ECO:0007669"/>
    <property type="project" value="Ensembl"/>
</dbReference>
<dbReference type="GO" id="GO:0005739">
    <property type="term" value="C:mitochondrion"/>
    <property type="evidence" value="ECO:0007669"/>
    <property type="project" value="GOC"/>
</dbReference>
<dbReference type="GO" id="GO:0005665">
    <property type="term" value="C:RNA polymerase II, core complex"/>
    <property type="evidence" value="ECO:0000314"/>
    <property type="project" value="UniProtKB"/>
</dbReference>
<dbReference type="GO" id="GO:0001046">
    <property type="term" value="F:core promoter sequence-specific DNA binding"/>
    <property type="evidence" value="ECO:0007669"/>
    <property type="project" value="Ensembl"/>
</dbReference>
<dbReference type="GO" id="GO:0003899">
    <property type="term" value="F:DNA-directed RNA polymerase activity"/>
    <property type="evidence" value="ECO:0000314"/>
    <property type="project" value="UniProtKB"/>
</dbReference>
<dbReference type="GO" id="GO:0071667">
    <property type="term" value="F:DNA/RNA hybrid binding"/>
    <property type="evidence" value="ECO:0000314"/>
    <property type="project" value="UniProtKB"/>
</dbReference>
<dbReference type="GO" id="GO:0016787">
    <property type="term" value="F:hydrolase activity"/>
    <property type="evidence" value="ECO:0007669"/>
    <property type="project" value="UniProtKB-KW"/>
</dbReference>
<dbReference type="GO" id="GO:0000287">
    <property type="term" value="F:magnesium ion binding"/>
    <property type="evidence" value="ECO:0000314"/>
    <property type="project" value="UniProtKB"/>
</dbReference>
<dbReference type="GO" id="GO:0003968">
    <property type="term" value="F:RNA-directed RNA polymerase activity"/>
    <property type="evidence" value="ECO:0007669"/>
    <property type="project" value="UniProtKB-KW"/>
</dbReference>
<dbReference type="GO" id="GO:0008270">
    <property type="term" value="F:zinc ion binding"/>
    <property type="evidence" value="ECO:0000314"/>
    <property type="project" value="UniProtKB"/>
</dbReference>
<dbReference type="GO" id="GO:0006366">
    <property type="term" value="P:transcription by RNA polymerase II"/>
    <property type="evidence" value="ECO:0007669"/>
    <property type="project" value="InterPro"/>
</dbReference>
<dbReference type="CDD" id="cd02584">
    <property type="entry name" value="RNAP_II_Rpb1_C"/>
    <property type="match status" value="1"/>
</dbReference>
<dbReference type="CDD" id="cd02733">
    <property type="entry name" value="RNAP_II_RPB1_N"/>
    <property type="match status" value="1"/>
</dbReference>
<dbReference type="FunFam" id="2.40.40.20:FF:000019">
    <property type="entry name" value="DNA-directed RNA polymerase II subunit RPB1"/>
    <property type="match status" value="1"/>
</dbReference>
<dbReference type="FunFam" id="1.10.132.30:FF:000001">
    <property type="entry name" value="DNA-directed RNA polymerase subunit"/>
    <property type="match status" value="1"/>
</dbReference>
<dbReference type="FunFam" id="1.10.150.390:FF:000001">
    <property type="entry name" value="DNA-directed RNA polymerase subunit"/>
    <property type="match status" value="1"/>
</dbReference>
<dbReference type="FunFam" id="1.10.274.100:FF:000001">
    <property type="entry name" value="DNA-directed RNA polymerase subunit"/>
    <property type="match status" value="1"/>
</dbReference>
<dbReference type="FunFam" id="3.30.1360.140:FF:000001">
    <property type="entry name" value="DNA-directed RNA polymerase subunit"/>
    <property type="match status" value="1"/>
</dbReference>
<dbReference type="FunFam" id="3.30.1490.180:FF:000001">
    <property type="entry name" value="DNA-directed RNA polymerase subunit"/>
    <property type="match status" value="1"/>
</dbReference>
<dbReference type="FunFam" id="4.10.860.120:FF:000002">
    <property type="entry name" value="DNA-directed RNA polymerase subunit"/>
    <property type="match status" value="1"/>
</dbReference>
<dbReference type="FunFam" id="4.10.860.120:FF:000005">
    <property type="entry name" value="DNA-directed RNA polymerase subunit"/>
    <property type="match status" value="1"/>
</dbReference>
<dbReference type="Gene3D" id="1.10.132.30">
    <property type="match status" value="1"/>
</dbReference>
<dbReference type="Gene3D" id="1.10.150.390">
    <property type="match status" value="1"/>
</dbReference>
<dbReference type="Gene3D" id="2.40.40.20">
    <property type="match status" value="1"/>
</dbReference>
<dbReference type="Gene3D" id="3.30.1360.140">
    <property type="match status" value="1"/>
</dbReference>
<dbReference type="Gene3D" id="6.10.250.2940">
    <property type="match status" value="1"/>
</dbReference>
<dbReference type="Gene3D" id="6.20.50.80">
    <property type="match status" value="1"/>
</dbReference>
<dbReference type="Gene3D" id="3.30.1490.180">
    <property type="entry name" value="RNA polymerase ii"/>
    <property type="match status" value="1"/>
</dbReference>
<dbReference type="Gene3D" id="4.10.860.120">
    <property type="entry name" value="RNA polymerase II, clamp domain"/>
    <property type="match status" value="2"/>
</dbReference>
<dbReference type="Gene3D" id="1.10.274.100">
    <property type="entry name" value="RNA polymerase Rpb1, domain 3"/>
    <property type="match status" value="1"/>
</dbReference>
<dbReference type="InterPro" id="IPR045867">
    <property type="entry name" value="DNA-dir_RpoC_beta_prime"/>
</dbReference>
<dbReference type="InterPro" id="IPR000722">
    <property type="entry name" value="RNA_pol_asu"/>
</dbReference>
<dbReference type="InterPro" id="IPR000684">
    <property type="entry name" value="RNA_pol_II_repeat_euk"/>
</dbReference>
<dbReference type="InterPro" id="IPR006592">
    <property type="entry name" value="RNA_pol_N"/>
</dbReference>
<dbReference type="InterPro" id="IPR007080">
    <property type="entry name" value="RNA_pol_Rpb1_1"/>
</dbReference>
<dbReference type="InterPro" id="IPR007066">
    <property type="entry name" value="RNA_pol_Rpb1_3"/>
</dbReference>
<dbReference type="InterPro" id="IPR042102">
    <property type="entry name" value="RNA_pol_Rpb1_3_sf"/>
</dbReference>
<dbReference type="InterPro" id="IPR007083">
    <property type="entry name" value="RNA_pol_Rpb1_4"/>
</dbReference>
<dbReference type="InterPro" id="IPR007081">
    <property type="entry name" value="RNA_pol_Rpb1_5"/>
</dbReference>
<dbReference type="InterPro" id="IPR007075">
    <property type="entry name" value="RNA_pol_Rpb1_6"/>
</dbReference>
<dbReference type="InterPro" id="IPR007073">
    <property type="entry name" value="RNA_pol_Rpb1_7"/>
</dbReference>
<dbReference type="InterPro" id="IPR038593">
    <property type="entry name" value="RNA_pol_Rpb1_7_sf"/>
</dbReference>
<dbReference type="InterPro" id="IPR044893">
    <property type="entry name" value="RNA_pol_Rpb1_clamp_domain"/>
</dbReference>
<dbReference type="InterPro" id="IPR038120">
    <property type="entry name" value="Rpb1_funnel_sf"/>
</dbReference>
<dbReference type="NCBIfam" id="NF006336">
    <property type="entry name" value="PRK08566.1"/>
    <property type="match status" value="1"/>
</dbReference>
<dbReference type="PANTHER" id="PTHR19376">
    <property type="entry name" value="DNA-DIRECTED RNA POLYMERASE"/>
    <property type="match status" value="1"/>
</dbReference>
<dbReference type="PANTHER" id="PTHR19376:SF37">
    <property type="entry name" value="DNA-DIRECTED RNA POLYMERASE II SUBUNIT RPB1"/>
    <property type="match status" value="1"/>
</dbReference>
<dbReference type="Pfam" id="PF04997">
    <property type="entry name" value="RNA_pol_Rpb1_1"/>
    <property type="match status" value="1"/>
</dbReference>
<dbReference type="Pfam" id="PF00623">
    <property type="entry name" value="RNA_pol_Rpb1_2"/>
    <property type="match status" value="1"/>
</dbReference>
<dbReference type="Pfam" id="PF04983">
    <property type="entry name" value="RNA_pol_Rpb1_3"/>
    <property type="match status" value="1"/>
</dbReference>
<dbReference type="Pfam" id="PF05000">
    <property type="entry name" value="RNA_pol_Rpb1_4"/>
    <property type="match status" value="1"/>
</dbReference>
<dbReference type="Pfam" id="PF04998">
    <property type="entry name" value="RNA_pol_Rpb1_5"/>
    <property type="match status" value="1"/>
</dbReference>
<dbReference type="Pfam" id="PF04992">
    <property type="entry name" value="RNA_pol_Rpb1_6"/>
    <property type="match status" value="1"/>
</dbReference>
<dbReference type="Pfam" id="PF04990">
    <property type="entry name" value="RNA_pol_Rpb1_7"/>
    <property type="match status" value="1"/>
</dbReference>
<dbReference type="Pfam" id="PF05001">
    <property type="entry name" value="RNA_pol_Rpb1_R"/>
    <property type="match status" value="35"/>
</dbReference>
<dbReference type="PRINTS" id="PR01217">
    <property type="entry name" value="PRICHEXTENSN"/>
</dbReference>
<dbReference type="SMART" id="SM00663">
    <property type="entry name" value="RPOLA_N"/>
    <property type="match status" value="1"/>
</dbReference>
<dbReference type="SUPFAM" id="SSF64484">
    <property type="entry name" value="beta and beta-prime subunits of DNA dependent RNA-polymerase"/>
    <property type="match status" value="1"/>
</dbReference>
<dbReference type="PROSITE" id="PS00115">
    <property type="entry name" value="RNA_POL_II_REPEAT"/>
    <property type="match status" value="21"/>
</dbReference>
<protein>
    <recommendedName>
        <fullName>DNA-directed RNA polymerase II subunit RPB1</fullName>
        <ecNumber evidence="6 7">2.7.7.6</ecNumber>
    </recommendedName>
    <alternativeName>
        <fullName>3'-5' exoribonuclease</fullName>
        <ecNumber evidence="3 12">3.1.13.-</ecNumber>
    </alternativeName>
    <alternativeName>
        <fullName>RNA-directed RNA polymerase II subunit RPB1</fullName>
        <ecNumber evidence="3">2.7.7.48</ecNumber>
    </alternativeName>
</protein>
<evidence type="ECO:0000250" key="1">
    <source>
        <dbReference type="UniProtKB" id="P04050"/>
    </source>
</evidence>
<evidence type="ECO:0000250" key="2">
    <source>
        <dbReference type="UniProtKB" id="P08775"/>
    </source>
</evidence>
<evidence type="ECO:0000250" key="3">
    <source>
        <dbReference type="UniProtKB" id="P24928"/>
    </source>
</evidence>
<evidence type="ECO:0000255" key="4"/>
<evidence type="ECO:0000256" key="5">
    <source>
        <dbReference type="SAM" id="MobiDB-lite"/>
    </source>
</evidence>
<evidence type="ECO:0000269" key="6">
    <source>
    </source>
</evidence>
<evidence type="ECO:0000269" key="7">
    <source>
    </source>
</evidence>
<evidence type="ECO:0000269" key="8">
    <source>
    </source>
</evidence>
<evidence type="ECO:0000269" key="9">
    <source>
    </source>
</evidence>
<evidence type="ECO:0000305" key="10"/>
<evidence type="ECO:0000305" key="11">
    <source>
    </source>
</evidence>
<evidence type="ECO:0000305" key="12">
    <source>
    </source>
</evidence>
<evidence type="ECO:0007744" key="13">
    <source>
        <dbReference type="PDB" id="5FLM"/>
    </source>
</evidence>
<evidence type="ECO:0007744" key="14">
    <source>
        <dbReference type="PDB" id="5OIK"/>
    </source>
</evidence>
<evidence type="ECO:0007829" key="15">
    <source>
        <dbReference type="PDB" id="5FLM"/>
    </source>
</evidence>
<proteinExistence type="evidence at protein level"/>
<reference key="1">
    <citation type="journal article" date="2009" name="Genome Biol.">
        <title>A whole-genome assembly of the domestic cow, Bos taurus.</title>
        <authorList>
            <person name="Zimin A.V."/>
            <person name="Delcher A.L."/>
            <person name="Florea L."/>
            <person name="Kelley D.R."/>
            <person name="Schatz M.C."/>
            <person name="Puiu D."/>
            <person name="Hanrahan F."/>
            <person name="Pertea G."/>
            <person name="Van Tassell C.P."/>
            <person name="Sonstegard T.S."/>
            <person name="Marcais G."/>
            <person name="Roberts M."/>
            <person name="Subramanian P."/>
            <person name="Yorke J.A."/>
            <person name="Salzberg S.L."/>
        </authorList>
    </citation>
    <scope>NUCLEOTIDE SEQUENCE [LARGE SCALE GENOMIC DNA]</scope>
</reference>
<reference key="2">
    <citation type="journal article" date="1998" name="Cell">
        <title>Transcriptional fidelity and proofreading by RNA polymerase II.</title>
        <authorList>
            <person name="Thomas M.J."/>
            <person name="Platas A.A."/>
            <person name="Hawley D.K."/>
        </authorList>
    </citation>
    <scope>FUNCTION</scope>
    <scope>CATALYTIC ACTIVITY</scope>
</reference>
<reference key="3">
    <citation type="journal article" date="2006" name="Proc. Natl. Acad. Sci. U.S.A.">
        <title>A Mediator-responsive form of metazoan RNA polymerase II.</title>
        <authorList>
            <person name="Hu X."/>
            <person name="Malik S."/>
            <person name="Negroiu C.C."/>
            <person name="Hubbard K."/>
            <person name="Velalar C.N."/>
            <person name="Hampton B."/>
            <person name="Grosu D."/>
            <person name="Catalano J."/>
            <person name="Roeder R.G."/>
            <person name="Gnatt A."/>
        </authorList>
    </citation>
    <scope>FUNCTION</scope>
    <scope>CATALYTIC ACTIVITY</scope>
    <scope>SUBUNIT</scope>
    <scope>IDENTIFICATION IN POL II AND POL II(G) COMPLEXES</scope>
</reference>
<reference key="4">
    <citation type="journal article" date="2016" name="Nature">
        <title>Structure of transcribing mammalian RNA polymerase II.</title>
        <authorList>
            <person name="Bernecky C."/>
            <person name="Herzog F."/>
            <person name="Baumeister W."/>
            <person name="Plitzko J.M."/>
            <person name="Cramer P."/>
        </authorList>
    </citation>
    <scope>STRUCTURE BY ELECTRON MICROSCOPY (3.40 ANGSTROMS) IN COMPLEX WITH DNA-RNA HYBRID; MG(2+) AND ZN(2+)</scope>
    <scope>COFACTOR</scope>
    <scope>DOMAIN</scope>
    <scope>FUNCTION</scope>
    <scope>CATALYTIC ACTIVITY</scope>
    <scope>SUBUNIT</scope>
</reference>
<reference key="5">
    <citation type="journal article" date="2017" name="Nat. Struct. Mol. Biol.">
        <title>Structure of a transcribing RNA polymerase II-DSIF complex reveals a multidentate DNA-RNA clamp.</title>
        <authorList>
            <person name="Bernecky C."/>
            <person name="Plitzko J.M."/>
            <person name="Cramer P."/>
        </authorList>
    </citation>
    <scope>STRUCTURE BY ELECTRON MICROSCOPY (3.70 ANGSTROMS) IN COMPLEX WITH DNA-RNA HYBRID; MG(2+) AND ZN(2+)</scope>
    <scope>COFACTOR</scope>
    <scope>SUBUNIT</scope>
</reference>
<sequence>MHGGGPPSGDSACPLRTIKRVQFGVLSPDELKRMSVTEGGIKYPETTEGGRPKLGGLMDPRQGVIERTGRCQTCAGNMTECPGHFGHIELAKPVFHVGFLVKTMKVLRCVCFFCSKLLVDSNNPKIKDILAKSKGQPKKRLTHVYDLCKGKNICEGGEEMDNKFGVEQPEGDEDLTKEKGHGGCGRYQPRIRRSGLELYAEWKHVNEDSQEKKILLSPERVHEIFKRISDEECFVLGMEPRYARPEWMIVTVLPVPPLSVRPAVVMQGSARNQDDLTHKLADIVKINNQLRRNEQNGAAAHVIAEDVKLLQFHVATMVDNELPGLPRAMQKSGRPLKSLKQRLKGKEGRVRGNLMGKRVDFSARTVITPDPNLSIDQVGVPRSIAANMTFAEIVTPFNIDRLQELVRRGNSQYPGAKYIIRDNGDRIDLRFHPKPSDLHLQTGYKVERHMCDGDIVIFNRQPTLHKMSMMGHRVRILPWSTFRLNLSVTTPYNADFDGDEMNLHLPQSLETRAEIQELAMVPRMIVTPQSNRPVMGIVQDTLTAVRKFTKRDVFLERGEVMNLLMFLSTWDGKVPQPAILKPRPLWTGKQIFSLIIPGHINCIRTHSTHPDDEDSGPYKHISPGDTKVVVENGELIMGILCKKSLGTSAGSLVHISYLEMGHDITRLFYSNIQTVINNWLLIEGHTIGIGDSIADSKTYQDIQNTIKKAKQDVIEVIEKAHNNELEPTPGNTLRQTFENQVNRILNDARDKTGSSAQKSLSEYNNFKSMVVSGAKGSKINISQVIAVVGQQNVEGKRIPFGFKHRTLPHFIKDDYGPESRGFVENSYLAGLTPTEFFFHAMGGREGLIDTAVKTAETGYIQRRLIKSMESVMVKYDATVRNSINQVVQLRYGEDGLAGESVEFQNLATLKPSNKAFEKKFRFDYTNERALRRTLQEDLVKDVLSNAHIQNELEREFERMREDREVLRVIFPTGDSKVVLPCNLLRMIWNAQKIFHINPRLPSDLHPIKVVEGVKELSKKLVIVNGDDPLSRQAQENATLLFNIHLRSTLCSRRMAEEFRLSGEAFDWLLGEIESKFNQAIAHPGEMVGALAAQSLGEPATQMTLNTFHYAGVSAKNVTLGVPRLKELINISKKPKTPSLTVFLLGQSARDAERAKDILCRLEHTTLRKVTANTAIYYDPNPQSTVVAEDQEWVNVYYEMPDFDVARISPWLLRVELDRKHMTDRKLTMEQIAEKINAGFGDDLNCIFNDDNAEKLVLRIRIMNSDENKMQEEEEVVDKMDDDVFLRCIESNMLTDMTLQGIEQISKVYMHLPQTDNKKKIIITEDGEFKALQEWILETDGVSLMRVLSEKDVDPVRTTSNDIVEIFTVLGIEAVRKALERELYHVISFDGSYVNYRHLALLCDTMTCRGHLMAITRHGVNRQDTGPLMKCSFEETVDVLMEAAAHGESDPMKGVSENIMLGQLAPAGTGCFDLLLDAEKCKYGMEIPTNIPGLGAAGPTGMFFGSAPSPMGGISPAMTPWNQGATPAYGAWSPSVGSGMTPGAAGFSPSAASDASGFSPGYSPAWSPTPGSPGSPGPSSPYIPSPGGAMSPSYSPTSPAYEPRSPGGYTPQSPSYSPTSPSYSPTSPSYSPTSPNYSPTSPSYSPTSPSYSPTSPSYSPTSPSYSPTSPSYSPTSPSYSPTSPSYSPTSPSYSPTSPSYSPTSPSYSPTSPSYSPTSPSYSPTSPSYSPTSPSYSPTSPSYSPTSPNYSPTSPNYTPTSPSYSPTSPSYSPTSPNYTPTSPNYSPTSPSYSPTSPSYSPTSPSYSPSSPRYTPQSPTYTPSSPSYSPSSPSYSPTSPKYTPTSPSYSPSSPEYTPTSPKYSPTSPKYSPTSPKYSPTSPTYSPTTPKYSPTSPTYSPTSPVYTPTSPKYSPTSPTYSPTSPKYSPTSPTYSPTSPKGSTYSPTSPGYSPTSPTYSLTSPAISPDDSDDEN</sequence>
<accession>G3MZY8</accession>
<gene>
    <name type="primary">POLR2A</name>
</gene>
<organism>
    <name type="scientific">Bos taurus</name>
    <name type="common">Bovine</name>
    <dbReference type="NCBI Taxonomy" id="9913"/>
    <lineage>
        <taxon>Eukaryota</taxon>
        <taxon>Metazoa</taxon>
        <taxon>Chordata</taxon>
        <taxon>Craniata</taxon>
        <taxon>Vertebrata</taxon>
        <taxon>Euteleostomi</taxon>
        <taxon>Mammalia</taxon>
        <taxon>Eutheria</taxon>
        <taxon>Laurasiatheria</taxon>
        <taxon>Artiodactyla</taxon>
        <taxon>Ruminantia</taxon>
        <taxon>Pecora</taxon>
        <taxon>Bovidae</taxon>
        <taxon>Bovinae</taxon>
        <taxon>Bos</taxon>
    </lineage>
</organism>
<comment type="function">
    <text evidence="3 6 7 9">Catalytic core component of RNA polymerase II (Pol II), a DNA-dependent RNA polymerase which synthesizes mRNA precursors and many functional non-coding RNAs using the four ribonucleoside triphosphates as substrates (PubMed:16769904, PubMed:26789250). Pol II-mediated transcription cycle proceeds through transcription initiation, transcription elongation and transcription termination stages. During transcription initiation, Pol II pre-initiation complex (PIC) is recruited to DNA promoters, with focused-type promoters containing either the initiator (Inr) element, or the TATA-box found in cell-type specific genes and dispersed-type promoters that often contain hypomethylated CpG islands usually found in housekeeping genes. Once the polymerase has escaped from the promoter it enters the elongation phase during which RNA is actively polymerized, based on complementarity with the template DNA strand. Transcription termination involves the release of the RNA transcript and polymerase from the DNA (By similarity) (PubMed:16769904, PubMed:26789250). Forms Pol II active center together with the second largest subunit POLR2B/RPB2. Appends one nucleotide at a time to the 3' end of the nascent RNA, with POLR2A/RPB1 most likely contributing a Mg(2+)-coordinating DxDGD motif, and POLR2B/RPB2 participating in the coordination of a second Mg(2+) ion and providing lysine residues believed to facilitate Watson-Crick base pairing between the incoming nucleotide and template base. Typically, Mg(2+) ions direct a 5' nucleoside triphosphate to form a phosphodiester bond with the 3' hydroxyl of the preceding nucleotide of the nascent RNA, with the elimination of pyrophosphate. The reversible pyrophosphorolysis can occur at high pyrophosphate concentrations (PubMed:16769904, PubMed:26789250). Can proofread the nascent RNA transcript by means of a 3' -&gt; 5' exonuclease activity. If a ribonucleotide is mis-incorporated, backtracks along the template DNA and cleaves the phosphodiester bond releasing the mis-incorporated 5'-ribonucleotide (By similarity) (PubMed:9604937). Through its unique C-terminal domain (CTD, 52 heptapeptide tandem repeats) serves as a platform for assembly of factors that regulate transcription initiation, elongation and termination. CTD phosphorylation on Ser-5 mediates Pol II promoter escape, whereas phosphorylation on Ser-2 is required for Pol II pause release during transcription elongation and further pre-mRNA processing. Additionally, the regulation of gene expression levels depends on the balance between methylation and acetylation levels of the CTD-lysines. Initiation or early elongation steps of transcription of growth-factor-induced immediate early genes are regulated by the acetylation status of the CTD. Methylation and dimethylation have a repressive effect on target genes expression. Cooperates with mRNA splicing machinery in co-transcriptional 5'-end capping and co-transcriptional splicing of pre-mRNA (By similarity).</text>
</comment>
<comment type="function">
    <text evidence="3">RNA-dependent RNA polymerase that catalyzes the extension of a non-coding RNA (ncRNA) at the 3'-end using the four ribonucleoside triphosphates as substrates. An internal ncRNA sequence near the 3'-end serves as a template in a single-round Pol II-mediated RNA polymerization reaction. May decrease the stability of ncRNAs that repress Pol II-mediated gene transcription.</text>
</comment>
<comment type="catalytic activity">
    <reaction evidence="6 7">
        <text>RNA(n) + a ribonucleoside 5'-triphosphate = RNA(n+1) + diphosphate</text>
        <dbReference type="Rhea" id="RHEA:21248"/>
        <dbReference type="Rhea" id="RHEA-COMP:14527"/>
        <dbReference type="Rhea" id="RHEA-COMP:17342"/>
        <dbReference type="ChEBI" id="CHEBI:33019"/>
        <dbReference type="ChEBI" id="CHEBI:61557"/>
        <dbReference type="ChEBI" id="CHEBI:140395"/>
        <dbReference type="EC" id="2.7.7.6"/>
    </reaction>
    <physiologicalReaction direction="left-to-right" evidence="6 7">
        <dbReference type="Rhea" id="RHEA:21249"/>
    </physiologicalReaction>
    <physiologicalReaction direction="right-to-left" evidence="3">
        <dbReference type="Rhea" id="RHEA:21250"/>
    </physiologicalReaction>
</comment>
<comment type="catalytic activity">
    <reaction evidence="3">
        <text>RNA(n) + a ribonucleoside 5'-triphosphate = RNA(n+1) + diphosphate</text>
        <dbReference type="Rhea" id="RHEA:21248"/>
        <dbReference type="Rhea" id="RHEA-COMP:14527"/>
        <dbReference type="Rhea" id="RHEA-COMP:17342"/>
        <dbReference type="ChEBI" id="CHEBI:33019"/>
        <dbReference type="ChEBI" id="CHEBI:61557"/>
        <dbReference type="ChEBI" id="CHEBI:140395"/>
        <dbReference type="EC" id="2.7.7.48"/>
    </reaction>
    <physiologicalReaction direction="left-to-right" evidence="3">
        <dbReference type="Rhea" id="RHEA:21249"/>
    </physiologicalReaction>
</comment>
<comment type="catalytic activity">
    <reaction evidence="3 12">
        <text>a 3'-end ribonucleotidyl-ribonucleotide-RNA + H2O = a 3'-end ribonucleotide-RNA + a ribonucleoside 5'-phosphate + H(+)</text>
        <dbReference type="Rhea" id="RHEA:77763"/>
        <dbReference type="Rhea" id="RHEA-COMP:17428"/>
        <dbReference type="Rhea" id="RHEA-COMP:18982"/>
        <dbReference type="ChEBI" id="CHEBI:15377"/>
        <dbReference type="ChEBI" id="CHEBI:15378"/>
        <dbReference type="ChEBI" id="CHEBI:58043"/>
        <dbReference type="ChEBI" id="CHEBI:74896"/>
        <dbReference type="ChEBI" id="CHEBI:197502"/>
    </reaction>
    <physiologicalReaction direction="left-to-right" evidence="3 12">
        <dbReference type="Rhea" id="RHEA:77764"/>
    </physiologicalReaction>
</comment>
<comment type="cofactor">
    <cofactor evidence="7 8">
        <name>Mg(2+)</name>
        <dbReference type="ChEBI" id="CHEBI:18420"/>
    </cofactor>
    <text evidence="3 7 8">Two Mg(2+) ions are coordinated by both the catalytic residues and the nucleic acid substrate to enhance substrate recognition and catalytic efficiency.</text>
</comment>
<comment type="subunit">
    <text evidence="2 3 6 7 8">Component of the RNA polymerase II (Pol II) core complex consisting of 12 subunits: a ten-subunit catalytic core composed of POLR2A/RPB1, POLR2B/RPB2, POLR2C/RPB3, POLR2I/RPB9, POLR2J/RPB11, POLR2E/RPABC1, POLR2F/RPABC2, POLR2H/RPABC3, POLR2K/RPABC4 and POLR2L/RPABC5 and a mobile stalk composed of two subunits POLR2D/RPB4 and POLR2G/RPB7, protruding from the core and functioning primarily in transcription initiation. Part of Pol II(G) complex, in which Pol II core associates with an additional subunit POLR2M; unlike conventional Pol II, Pol II(G) functions as a transcriptional repressor. Part of Pol II pre-initiation complex (PIC), in which Pol II core assembles with Mediator, general transcription factors and other specific initiation factors including GTF2E1, GTF2E2, GTF2F1, GTF2F2, TCEA1, ERCC2, ERCC3, GTF2H2, GTF2H3, GTF2H4, GTF2H5, GTF2A1, GTF2A2, GTF2B and TBP; this large multi-subunit PIC complex mediates DNA unwinding and targets Pol II core to the transcription start site where the first phosphodiester bond forms (PubMed:16769904, PubMed:26789250, PubMed:28892040). Component of a complex which is at least composed of HTATSF1/Tat-SF1, the P-TEFb complex components CDK9 and CCNT1, Pol II, SUPT5H, and NCL/nucleolin. The large PER complex involved in the repression of transcriptional termination is composed of at least PER2, CDK9, DDX5, DHX9, NCBP1 and POLR2A (active). Interacts (via the C-terminal domain (CTD)) with U2AF2; recruits PRPF19 and the Prp19 complex to the pre-mRNA and may couple transcription to pre-mRNA splicing. Interacts (via the C-terminal domain (CTD)) with SMN1/SMN2; recruits SMN1/SMN2 to RNA Pol II elongation complexes. Interacts via the phosphorylated C-terminal domain with WDR82 and with SETD1A and SETD1B only in the presence of WDR82. When phosphorylated at 'Ser-5', interacts with MEN1; the unphosphorylated form, or phosphorylated at 'Ser-2' does not interact. When phosphorylated at 'Ser-5', interacts with ZMYND8; the form phosphorylated at 'Ser-2' does not interact. When phosphorylated at 'Ser-2', interacts with SUPT6H (via SH2 domain). Interacts with RECQL5 and TCEA1; binding of RECQL5 prevents TCEA1 binding. The phosphorylated C-terminal domain interacts with FNBP3. The phosphorylated C-terminal domain interacts with SYNCRIP. Interacts with ATF7IP. Interacts with DDX5 (By similarity). Interacts with WWP2 (By similarity). Interacts with SETX. Interacts (phosphorylated) with PIH1D1. Interacts (via the C-terminal domain (CTD)) with TDRD3. Interacts with PRMT5. Interacts with XRN2. Interacts with SAFB/SAFB1. Interacts with CCNL1. Interacts with CCNL2 (By similarity). Interacts with MYO1C (By similarity). Interacts with PAF1. Interacts with SFRS19. Interacts (via C-terminus) with CMTR1. Interacts (via C-terminus) with CTDSP1. Interacts (via C-terminus) with SCAF8. Interacts (via the C-terminal domain (CTD)) with CCNT2. Interacts with FUS. Interacts with MCM3AP isoform GANP. Interacts with kinase SRPK2; the interaction occurs during the co-transcriptional formation of inappropriate R-loops. Interacts with SETD2. Interacts with UVSSA. Interacts with ERCC6. Interacts with the TFIIH complex (By similarity).</text>
</comment>
<comment type="interaction">
    <interactant intactId="EBI-6551200">
        <id>G3MZY8</id>
    </interactant>
    <interactant intactId="EBI-15586776">
        <id>A5PJW8</id>
        <label>POLR2B</label>
    </interactant>
    <organismsDiffer>false</organismsDiffer>
    <experiments>6</experiments>
</comment>
<comment type="interaction">
    <interactant intactId="EBI-6551200">
        <id>G3MZY8</id>
    </interactant>
    <interactant intactId="EBI-15586877">
        <id>Q2T9T3</id>
        <label>POLR2E</label>
    </interactant>
    <organismsDiffer>false</organismsDiffer>
    <experiments>8</experiments>
</comment>
<comment type="interaction">
    <interactant intactId="EBI-6551200">
        <id>G3MZY8</id>
    </interactant>
    <interactant intactId="EBI-710464">
        <id>O00267</id>
        <label>SUPT5H</label>
    </interactant>
    <organismsDiffer>true</organismsDiffer>
    <experiments>2</experiments>
</comment>
<comment type="subcellular location">
    <subcellularLocation>
        <location evidence="3">Nucleus</location>
    </subcellularLocation>
    <subcellularLocation>
        <location evidence="3">Cytoplasm</location>
    </subcellularLocation>
    <subcellularLocation>
        <location evidence="3">Chromosome</location>
    </subcellularLocation>
    <text evidence="3">Hypophosphorylated form is mainly found in the cytoplasm, while the hyperphosphorylated and active form is nuclear. Co-localizes with kinase SRPK2 and helicase DDX23 at chromatin loci where unscheduled R-loops form.</text>
</comment>
<comment type="domain">
    <text evidence="3">The C-terminal domain (CTD) serves as a platform for assembly of factors that regulate transcription initiation, elongation, termination and mRNA processing.</text>
</comment>
<comment type="domain">
    <text evidence="11">The trigger loop allows entry of NTPs into the active site, switching between an open and closed state with each NTP addition cycle.</text>
</comment>
<comment type="domain">
    <text evidence="11">The bridging helix crosses the cleft near the catalytic site and is thought to promote polymerase translocation by acting as a ratchet that moves the DNA-RNA hybrid through the active site.</text>
</comment>
<comment type="PTM">
    <text evidence="3">The tandem heptapeptide repeats in the C-terminal domain (CTD) can be highly phosphorylated. The phosphorylation activates Pol II. Phosphorylation occurs mainly at residues 'Ser-2' and 'Ser-5' of the heptapeptide repeat and is mediated, at least, by CDK7 and CDK9. POLR2A associated with DNA is specifically phosphorylated at 'Ser-5' of the CTD by CDK7, promoting transcription initiation by triggering dissociation from DNA. Phosphorylated at 'Ser-2', Ser-5' and 'Ser-7' of the CTD by CDK9 (P-TEFb complex), promoting transcription elongation. Phosphorylation also takes place at 'Ser-7' of the heptapeptide repeat, which is required for efficient transcription of snRNA genes and processing of the transcripts. The phosphorylation state is believed to result from the balanced action of site-specific CTD kinases and phosphatases, and a 'CTD code' that specifies the position of Pol II within the transcription cycle has been proposed. Dephosphorylated by the INTAC complex when transcripts are unfavorably configured for transcriptional elongation, leading to premature transcription termination: dephosphorylation is mediated by the PPP2CA component of the INTAC complex. In response to replication stress, dephosphorylated at 'Ser-5' of the CTD by the PNUTS-PP1 complex, promoting RNA polymerase II degradation. Dephosphorylated by the protein phosphatase CTDSP1. Dephosphorylated at 'Ser-2' following UV irradiation.</text>
</comment>
<comment type="PTM">
    <text evidence="3">Among tandem heptapeptide repeats of the C-terminal domain (CTD) some do not match the Y-S-P-T-S-P-S consensus, the seventh serine residue 'Ser-7' being replaced by a lysine. 'Lys-7' in these non-consensus heptapeptide repeats can be alternatively acetylated, methylated and dimethylated. EP300 is one of the enzyme able to acetylate 'Lys-7'. Acetylation at 'Lys-7' of non-consensus heptapeptide repeats is associated with 'Ser-2' phosphorylation and active transcription. Regulates initiation or early elongation steps of transcription specially for inducible genes.</text>
</comment>
<comment type="PTM">
    <text evidence="3">Methylated at Arg-1810 prior to transcription initiation when the CTD is hypophosphorylated, phosphorylation at Ser-1805 and Ser-1808 preventing this methylation. Symmetrically or asymmetrically dimethylated at Arg-1810 by PRMT5 and CARM1 respectively. Symmetric or asymmetric dimethylation modulates interactions with CTD-binding proteins like SMN1/SMN2 and TDRD3. SMN1/SMN2 interacts preferentially with the symmetrically dimethylated form while TDRD3 interacts with the asymmetric form. Through the recruitment of SMN1/SMN2, symmetric dimethylation is required for resolving RNA-DNA hybrids created by RNA polymerase II, that form R-loop in transcription terminal regions, an important step in proper transcription termination. CTD dimethylation may also facilitate the expression of select RNAs. Among tandem heptapeptide repeats of the C-terminal domain (CTD) some do not match the Y-S-P-T-S-P-S consensus, the seventh serine residue 'Ser-7' being replaced by a lysine. 'Lys-7' in these non-consensus heptapeptide repeats can be alternatively acetylated, methylated, dimethylated and trimethylated. Methylation occurs in the earliest transcription stages and precedes or is concomitant to 'Ser-5' and 'Ser-7' phosphorylation. Dimethylation and trimehtylation at 'Lys-7' of non-consensus heptapeptide repeats are exclusively associated with phosphorylated CTD.</text>
</comment>
<comment type="PTM">
    <text evidence="2 3">Following transcription stress, the elongating form of RNA polymerase II (RNA pol IIo) is ubiquitinated by the DCX(ERCC8) complex (also named CSA complex) on Lys-1268 at DNA damage sites without leading to degradation: ubiquitination promotes RNA pol IIo backtracking to allow access by the transcription-coupled nucleotide excision repair (TC-NER) machinery. At stalled RNA pol II where TC-NER has failed, RBX1-mediated polybiquitination at Lys-1268 may lead to proteasome-mediated degradation in a UBAP2- and UBAP2L-dependent manner; presumably to halt global transcription and enable 'last resort' DNA repair pathways. Ubiquitinated by the BCR(ARMC5) complex when transcripts are unfavorably configured for transcriptional elongation: the BCR(ARMC5) complex specifically catalyzes ubiquitination of POLR2A phosphorylated at 'Ser-5' of the C-terminal domain (CTD), leading to POLR2A degradation. Ubiquitination by the BCR(ARMC5) complex takes place at residues distinct from Lys-1268 (By similarity). Ubiquitinated by WWP2 leading to proteasomal degradation (By similarity).</text>
</comment>
<comment type="similarity">
    <text evidence="10">Belongs to the RNA polymerase beta' chain family.</text>
</comment>
<name>RPB1_BOVIN</name>
<keyword id="KW-0002">3D-structure</keyword>
<keyword id="KW-0007">Acetylation</keyword>
<keyword id="KW-0158">Chromosome</keyword>
<keyword id="KW-0963">Cytoplasm</keyword>
<keyword id="KW-0238">DNA-binding</keyword>
<keyword id="KW-0240">DNA-directed RNA polymerase</keyword>
<keyword id="KW-0945">Host-virus interaction</keyword>
<keyword id="KW-0378">Hydrolase</keyword>
<keyword id="KW-1017">Isopeptide bond</keyword>
<keyword id="KW-0460">Magnesium</keyword>
<keyword id="KW-0479">Metal-binding</keyword>
<keyword id="KW-0488">Methylation</keyword>
<keyword id="KW-0548">Nucleotidyltransferase</keyword>
<keyword id="KW-0539">Nucleus</keyword>
<keyword id="KW-0597">Phosphoprotein</keyword>
<keyword id="KW-1185">Reference proteome</keyword>
<keyword id="KW-0677">Repeat</keyword>
<keyword id="KW-0696">RNA-directed RNA polymerase</keyword>
<keyword id="KW-0804">Transcription</keyword>
<keyword id="KW-0808">Transferase</keyword>
<keyword id="KW-0832">Ubl conjugation</keyword>
<keyword id="KW-0862">Zinc</keyword>
<feature type="chain" id="PRO_0000459629" description="DNA-directed RNA polymerase II subunit RPB1">
    <location>
        <begin position="1"/>
        <end position="1970"/>
    </location>
</feature>
<feature type="repeat" description="1" evidence="4">
    <location>
        <begin position="1593"/>
        <end position="1599"/>
    </location>
</feature>
<feature type="repeat" description="2; approximate" evidence="4">
    <location>
        <begin position="1600"/>
        <end position="1606"/>
    </location>
</feature>
<feature type="repeat" description="3" evidence="4">
    <location>
        <begin position="1608"/>
        <end position="1614"/>
    </location>
</feature>
<feature type="repeat" description="4" evidence="4">
    <location>
        <begin position="1615"/>
        <end position="1621"/>
    </location>
</feature>
<feature type="repeat" description="5" evidence="4">
    <location>
        <begin position="1622"/>
        <end position="1628"/>
    </location>
</feature>
<feature type="repeat" description="6" evidence="4">
    <location>
        <begin position="1629"/>
        <end position="1635"/>
    </location>
</feature>
<feature type="repeat" description="7" evidence="4">
    <location>
        <begin position="1636"/>
        <end position="1642"/>
    </location>
</feature>
<feature type="repeat" description="8" evidence="4">
    <location>
        <begin position="1643"/>
        <end position="1649"/>
    </location>
</feature>
<feature type="repeat" description="9" evidence="4">
    <location>
        <begin position="1650"/>
        <end position="1656"/>
    </location>
</feature>
<feature type="repeat" description="10" evidence="4">
    <location>
        <begin position="1657"/>
        <end position="1663"/>
    </location>
</feature>
<feature type="repeat" description="11" evidence="4">
    <location>
        <begin position="1664"/>
        <end position="1670"/>
    </location>
</feature>
<feature type="repeat" description="12" evidence="4">
    <location>
        <begin position="1671"/>
        <end position="1677"/>
    </location>
</feature>
<feature type="repeat" description="13" evidence="4">
    <location>
        <begin position="1678"/>
        <end position="1684"/>
    </location>
</feature>
<feature type="repeat" description="14" evidence="4">
    <location>
        <begin position="1685"/>
        <end position="1691"/>
    </location>
</feature>
<feature type="repeat" description="15" evidence="4">
    <location>
        <begin position="1692"/>
        <end position="1698"/>
    </location>
</feature>
<feature type="repeat" description="16" evidence="4">
    <location>
        <begin position="1699"/>
        <end position="1705"/>
    </location>
</feature>
<feature type="repeat" description="17" evidence="4">
    <location>
        <begin position="1706"/>
        <end position="1712"/>
    </location>
</feature>
<feature type="repeat" description="18" evidence="4">
    <location>
        <begin position="1713"/>
        <end position="1719"/>
    </location>
</feature>
<feature type="repeat" description="19" evidence="4">
    <location>
        <begin position="1720"/>
        <end position="1726"/>
    </location>
</feature>
<feature type="repeat" description="20" evidence="4">
    <location>
        <begin position="1727"/>
        <end position="1733"/>
    </location>
</feature>
<feature type="repeat" description="21" evidence="4">
    <location>
        <begin position="1734"/>
        <end position="1740"/>
    </location>
</feature>
<feature type="repeat" description="22" evidence="4">
    <location>
        <begin position="1741"/>
        <end position="1747"/>
    </location>
</feature>
<feature type="repeat" description="23" evidence="4">
    <location>
        <begin position="1748"/>
        <end position="1754"/>
    </location>
</feature>
<feature type="repeat" description="24" evidence="4">
    <location>
        <begin position="1755"/>
        <end position="1761"/>
    </location>
</feature>
<feature type="repeat" description="25" evidence="4">
    <location>
        <begin position="1762"/>
        <end position="1768"/>
    </location>
</feature>
<feature type="repeat" description="26" evidence="4">
    <location>
        <begin position="1769"/>
        <end position="1775"/>
    </location>
</feature>
<feature type="repeat" description="27" evidence="4">
    <location>
        <begin position="1776"/>
        <end position="1782"/>
    </location>
</feature>
<feature type="repeat" description="28" evidence="4">
    <location>
        <begin position="1783"/>
        <end position="1789"/>
    </location>
</feature>
<feature type="repeat" description="29" evidence="4">
    <location>
        <begin position="1790"/>
        <end position="1796"/>
    </location>
</feature>
<feature type="repeat" description="30" evidence="4">
    <location>
        <begin position="1797"/>
        <end position="1803"/>
    </location>
</feature>
<feature type="repeat" description="31" evidence="4">
    <location>
        <begin position="1804"/>
        <end position="1810"/>
    </location>
</feature>
<feature type="repeat" description="32" evidence="4">
    <location>
        <begin position="1811"/>
        <end position="1817"/>
    </location>
</feature>
<feature type="repeat" description="33" evidence="4">
    <location>
        <begin position="1818"/>
        <end position="1824"/>
    </location>
</feature>
<feature type="repeat" description="34" evidence="4">
    <location>
        <begin position="1825"/>
        <end position="1831"/>
    </location>
</feature>
<feature type="repeat" description="35" evidence="4">
    <location>
        <begin position="1832"/>
        <end position="1838"/>
    </location>
</feature>
<feature type="repeat" description="36" evidence="4">
    <location>
        <begin position="1839"/>
        <end position="1845"/>
    </location>
</feature>
<feature type="repeat" description="37" evidence="4">
    <location>
        <begin position="1846"/>
        <end position="1852"/>
    </location>
</feature>
<feature type="repeat" description="38" evidence="4">
    <location>
        <begin position="1853"/>
        <end position="1859"/>
    </location>
</feature>
<feature type="repeat" description="39" evidence="4">
    <location>
        <begin position="1860"/>
        <end position="1866"/>
    </location>
</feature>
<feature type="repeat" description="40" evidence="4">
    <location>
        <begin position="1867"/>
        <end position="1873"/>
    </location>
</feature>
<feature type="repeat" description="41" evidence="4">
    <location>
        <begin position="1874"/>
        <end position="1880"/>
    </location>
</feature>
<feature type="repeat" description="42" evidence="4">
    <location>
        <begin position="1881"/>
        <end position="1887"/>
    </location>
</feature>
<feature type="repeat" description="43" evidence="4">
    <location>
        <begin position="1888"/>
        <end position="1894"/>
    </location>
</feature>
<feature type="repeat" description="44" evidence="4">
    <location>
        <begin position="1895"/>
        <end position="1901"/>
    </location>
</feature>
<feature type="repeat" description="45" evidence="4">
    <location>
        <begin position="1902"/>
        <end position="1908"/>
    </location>
</feature>
<feature type="repeat" description="46" evidence="4">
    <location>
        <begin position="1909"/>
        <end position="1915"/>
    </location>
</feature>
<feature type="repeat" description="47" evidence="4">
    <location>
        <begin position="1916"/>
        <end position="1922"/>
    </location>
</feature>
<feature type="repeat" description="48" evidence="4">
    <location>
        <begin position="1923"/>
        <end position="1929"/>
    </location>
</feature>
<feature type="repeat" description="49" evidence="4">
    <location>
        <begin position="1930"/>
        <end position="1936"/>
    </location>
</feature>
<feature type="repeat" description="50" evidence="4">
    <location>
        <begin position="1940"/>
        <end position="1946"/>
    </location>
</feature>
<feature type="repeat" description="51; approximate" evidence="4">
    <location>
        <begin position="1947"/>
        <end position="1953"/>
    </location>
</feature>
<feature type="repeat" description="52; approximate" evidence="4">
    <location>
        <begin position="1954"/>
        <end position="1960"/>
    </location>
</feature>
<feature type="region of interest" description="Bridging helix" evidence="11">
    <location>
        <begin position="832"/>
        <end position="873"/>
    </location>
</feature>
<feature type="region of interest" description="Trigger loop" evidence="11">
    <location>
        <begin position="1083"/>
        <end position="1124"/>
    </location>
</feature>
<feature type="region of interest" description="Disordered" evidence="5">
    <location>
        <begin position="1546"/>
        <end position="1970"/>
    </location>
</feature>
<feature type="region of interest" description="C-terminal domain (CTD); 52 X 7 AA approximate tandem repeats of Y-[ST]-P-[STQ]-[ST]-P-[SRTEVKGN]" evidence="4">
    <location>
        <begin position="1593"/>
        <end position="1960"/>
    </location>
</feature>
<feature type="compositionally biased region" description="Low complexity" evidence="5">
    <location>
        <begin position="1546"/>
        <end position="1568"/>
    </location>
</feature>
<feature type="compositionally biased region" description="Pro residues" evidence="5">
    <location>
        <begin position="1569"/>
        <end position="1583"/>
    </location>
</feature>
<feature type="compositionally biased region" description="Low complexity" evidence="5">
    <location>
        <begin position="1608"/>
        <end position="1959"/>
    </location>
</feature>
<feature type="binding site" evidence="7 13">
    <location>
        <position position="67"/>
    </location>
    <ligand>
        <name>RNA</name>
        <dbReference type="ChEBI" id="CHEBI:33697"/>
    </ligand>
</feature>
<feature type="binding site" evidence="7 8 13 14">
    <location>
        <position position="71"/>
    </location>
    <ligand>
        <name>Zn(2+)</name>
        <dbReference type="ChEBI" id="CHEBI:29105"/>
        <label>1</label>
    </ligand>
</feature>
<feature type="binding site" evidence="7 8 13 14">
    <location>
        <position position="74"/>
    </location>
    <ligand>
        <name>Zn(2+)</name>
        <dbReference type="ChEBI" id="CHEBI:29105"/>
        <label>1</label>
    </ligand>
</feature>
<feature type="binding site" evidence="7 8 13 14">
    <location>
        <position position="81"/>
    </location>
    <ligand>
        <name>Zn(2+)</name>
        <dbReference type="ChEBI" id="CHEBI:29105"/>
        <label>1</label>
    </ligand>
</feature>
<feature type="binding site" evidence="7 8 13 14">
    <location>
        <position position="84"/>
    </location>
    <ligand>
        <name>Zn(2+)</name>
        <dbReference type="ChEBI" id="CHEBI:29105"/>
        <label>1</label>
    </ligand>
</feature>
<feature type="binding site" evidence="7 8 13 14">
    <location>
        <position position="111"/>
    </location>
    <ligand>
        <name>Zn(2+)</name>
        <dbReference type="ChEBI" id="CHEBI:29105"/>
        <label>2</label>
    </ligand>
</feature>
<feature type="binding site" evidence="7 8 13 14">
    <location>
        <position position="114"/>
    </location>
    <ligand>
        <name>Zn(2+)</name>
        <dbReference type="ChEBI" id="CHEBI:29105"/>
        <label>2</label>
    </ligand>
</feature>
<feature type="binding site" evidence="7 13">
    <location>
        <position position="154"/>
    </location>
    <ligand>
        <name>Zn(2+)</name>
        <dbReference type="ChEBI" id="CHEBI:29105"/>
        <label>2</label>
    </ligand>
</feature>
<feature type="binding site" evidence="7 8 13 14">
    <location>
        <position position="184"/>
    </location>
    <ligand>
        <name>Zn(2+)</name>
        <dbReference type="ChEBI" id="CHEBI:29105"/>
        <label>2</label>
    </ligand>
</feature>
<feature type="binding site" evidence="7 8 13 14">
    <location>
        <position position="346"/>
    </location>
    <ligand>
        <name>DNA</name>
        <dbReference type="ChEBI" id="CHEBI:16991"/>
        <label>template strand</label>
    </ligand>
</feature>
<feature type="binding site" evidence="8 14">
    <location>
        <position position="358"/>
    </location>
    <ligand>
        <name>DNA</name>
        <dbReference type="ChEBI" id="CHEBI:16991"/>
        <label>template strand</label>
    </ligand>
</feature>
<feature type="binding site" evidence="7 8 13 14">
    <location>
        <position position="460"/>
    </location>
    <ligand>
        <name>RNA</name>
        <dbReference type="ChEBI" id="CHEBI:33697"/>
    </ligand>
</feature>
<feature type="binding site" evidence="3">
    <location>
        <position position="493"/>
    </location>
    <ligand>
        <name>Mg(2+)</name>
        <dbReference type="ChEBI" id="CHEBI:18420"/>
        <label>1</label>
        <note>catalytic</note>
    </ligand>
</feature>
<feature type="binding site" evidence="7 8 13 14">
    <location>
        <position position="495"/>
    </location>
    <ligand>
        <name>Mg(2+)</name>
        <dbReference type="ChEBI" id="CHEBI:18420"/>
        <label>1</label>
        <note>catalytic</note>
    </ligand>
</feature>
<feature type="binding site" evidence="3">
    <location>
        <position position="495"/>
    </location>
    <ligand>
        <name>Mg(2+)</name>
        <dbReference type="ChEBI" id="CHEBI:18420"/>
        <label>2</label>
        <note>ligand shared with POLR2B/RPB2</note>
    </ligand>
</feature>
<feature type="binding site" evidence="8 14">
    <location>
        <position position="497"/>
    </location>
    <ligand>
        <name>Mg(2+)</name>
        <dbReference type="ChEBI" id="CHEBI:18420"/>
        <label>1</label>
        <note>catalytic</note>
    </ligand>
</feature>
<feature type="binding site" evidence="1">
    <location>
        <position position="497"/>
    </location>
    <ligand>
        <name>Mg(2+)</name>
        <dbReference type="ChEBI" id="CHEBI:18420"/>
        <label>2</label>
        <note>ligand shared with POLR2B/RPB2</note>
    </ligand>
</feature>
<feature type="binding site" evidence="7 8 13 14">
    <location>
        <position position="499"/>
    </location>
    <ligand>
        <name>Mg(2+)</name>
        <dbReference type="ChEBI" id="CHEBI:18420"/>
        <label>1</label>
        <note>catalytic</note>
    </ligand>
</feature>
<feature type="binding site" evidence="7 8 13 14">
    <location>
        <position position="499"/>
    </location>
    <ligand>
        <name>RNA</name>
        <dbReference type="ChEBI" id="CHEBI:33697"/>
    </ligand>
</feature>
<feature type="binding site" evidence="7 8 13 14">
    <location>
        <position position="1416"/>
    </location>
    <ligand>
        <name>DNA</name>
        <dbReference type="ChEBI" id="CHEBI:16991"/>
        <label>template strand</label>
    </ligand>
</feature>
<feature type="binding site" evidence="7 13">
    <location>
        <position position="1421"/>
    </location>
    <ligand>
        <name>DNA</name>
        <dbReference type="ChEBI" id="CHEBI:16991"/>
        <label>nontemplate strand</label>
    </ligand>
</feature>
<feature type="modified residue" description="N-acetylmethionine" evidence="3">
    <location>
        <position position="1"/>
    </location>
</feature>
<feature type="modified residue" description="Phosphoserine" evidence="3">
    <location>
        <position position="27"/>
    </location>
</feature>
<feature type="modified residue" description="Phosphoserine" evidence="3">
    <location>
        <position position="217"/>
    </location>
</feature>
<feature type="modified residue" description="Omega-N-methylated arginine" evidence="3">
    <location>
        <position position="1603"/>
    </location>
</feature>
<feature type="modified residue" description="Asymmetric dimethylarginine; alternate" evidence="3">
    <location>
        <position position="1810"/>
    </location>
</feature>
<feature type="modified residue" description="Symmetric dimethylarginine; alternate" evidence="3">
    <location>
        <position position="1810"/>
    </location>
</feature>
<feature type="modified residue" description="N6,N6-dimethyllysine; alternate" evidence="2">
    <location>
        <position position="1838"/>
    </location>
</feature>
<feature type="modified residue" description="N6-methyllysine; alternate" evidence="2">
    <location>
        <position position="1838"/>
    </location>
</feature>
<feature type="modified residue" description="Phosphothreonine" evidence="3">
    <location>
        <position position="1840"/>
    </location>
</feature>
<feature type="modified residue" description="Phosphoserine" evidence="3">
    <location>
        <position position="1843"/>
    </location>
</feature>
<feature type="modified residue" description="Phosphoserine" evidence="3">
    <location>
        <position position="1845"/>
    </location>
</feature>
<feature type="modified residue" description="Phosphoserine" evidence="2">
    <location>
        <position position="1847"/>
    </location>
</feature>
<feature type="modified residue" description="Phosphoserine" evidence="3">
    <location>
        <position position="1849"/>
    </location>
</feature>
<feature type="modified residue" description="Phosphoserine" evidence="3">
    <location>
        <position position="1850"/>
    </location>
</feature>
<feature type="modified residue" description="Phosphothreonine" evidence="3">
    <location>
        <position position="1854"/>
    </location>
</feature>
<feature type="modified residue" description="Phosphoserine" evidence="3">
    <location>
        <position position="1857"/>
    </location>
</feature>
<feature type="modified residue" description="N6,N6-dimethyllysine; alternate" evidence="3">
    <location>
        <position position="1859"/>
    </location>
</feature>
<feature type="modified residue" description="N6-methyllysine; alternate" evidence="3">
    <location>
        <position position="1859"/>
    </location>
</feature>
<feature type="modified residue" description="Phosphotyrosine" evidence="3">
    <location>
        <position position="1860"/>
    </location>
</feature>
<feature type="modified residue" description="Phosphoserine" evidence="3">
    <location>
        <position position="1861"/>
    </location>
</feature>
<feature type="modified residue" description="Phosphothreonine" evidence="3">
    <location>
        <position position="1863"/>
    </location>
</feature>
<feature type="modified residue" description="Phosphoserine" evidence="3">
    <location>
        <position position="1864"/>
    </location>
</feature>
<feature type="modified residue" description="N6,N6,N6-trimethyllysine; alternate" evidence="3">
    <location>
        <position position="1866"/>
    </location>
</feature>
<feature type="modified residue" description="N6,N6-dimethyllysine; alternate" evidence="3">
    <location>
        <position position="1866"/>
    </location>
</feature>
<feature type="modified residue" description="N6-acetyllysine; alternate" evidence="3">
    <location>
        <position position="1866"/>
    </location>
</feature>
<feature type="modified residue" description="N6-methyllysine; alternate" evidence="3">
    <location>
        <position position="1866"/>
    </location>
</feature>
<feature type="modified residue" description="Phosphotyrosine" evidence="3">
    <location>
        <position position="1867"/>
    </location>
</feature>
<feature type="modified residue" description="Phosphoserine" evidence="3">
    <location>
        <position position="1868"/>
    </location>
</feature>
<feature type="modified residue" description="Phosphothreonine" evidence="3">
    <location>
        <position position="1870"/>
    </location>
</feature>
<feature type="modified residue" description="N6,N6,N6-trimethyllysine; alternate" evidence="3">
    <location>
        <position position="1873"/>
    </location>
</feature>
<feature type="modified residue" description="N6,N6-dimethyllysine; alternate" evidence="2">
    <location>
        <position position="1873"/>
    </location>
</feature>
<feature type="modified residue" description="N6-methyllysine; alternate" evidence="3">
    <location>
        <position position="1873"/>
    </location>
</feature>
<feature type="modified residue" description="Phosphotyrosine" evidence="3">
    <location>
        <position position="1874"/>
    </location>
</feature>
<feature type="modified residue" description="Phosphoserine" evidence="3">
    <location>
        <position position="1875"/>
    </location>
</feature>
<feature type="modified residue" description="Phosphothreonine" evidence="3">
    <location>
        <position position="1877"/>
    </location>
</feature>
<feature type="modified residue" description="Phosphoserine" evidence="3">
    <location>
        <position position="1878"/>
    </location>
</feature>
<feature type="modified residue" description="Phosphotyrosine" evidence="3">
    <location>
        <position position="1881"/>
    </location>
</feature>
<feature type="modified residue" description="Phosphoserine" evidence="3">
    <location>
        <position position="1882"/>
    </location>
</feature>
<feature type="modified residue" description="Phosphothreonine" evidence="3">
    <location>
        <position position="1885"/>
    </location>
</feature>
<feature type="modified residue" description="N6,N6-dimethyllysine; alternate" evidence="2">
    <location>
        <position position="1887"/>
    </location>
</feature>
<feature type="modified residue" description="N6-acetyllysine; alternate" evidence="3">
    <location>
        <position position="1887"/>
    </location>
</feature>
<feature type="modified residue" description="N6-methyllysine; alternate" evidence="3">
    <location>
        <position position="1887"/>
    </location>
</feature>
<feature type="modified residue" description="Phosphothreonine" evidence="2">
    <location>
        <position position="1894"/>
    </location>
</feature>
<feature type="modified residue" description="Phosphoserine" evidence="3">
    <location>
        <position position="1896"/>
    </location>
</feature>
<feature type="modified residue" description="Phosphoserine" evidence="3">
    <location>
        <position position="1899"/>
    </location>
</feature>
<feature type="modified residue" description="Phosphoserine" evidence="3">
    <location>
        <position position="1906"/>
    </location>
</feature>
<feature type="modified residue" description="N6,N6-dimethyllysine" evidence="2">
    <location>
        <position position="1908"/>
    </location>
</feature>
<feature type="modified residue" description="Phosphotyrosine" evidence="3">
    <location>
        <position position="1909"/>
    </location>
</feature>
<feature type="modified residue" description="Phosphothreonine" evidence="3">
    <location>
        <position position="1912"/>
    </location>
</feature>
<feature type="modified residue" description="Phosphoserine" evidence="3">
    <location>
        <position position="1913"/>
    </location>
</feature>
<feature type="modified residue" description="Phosphothreonine" evidence="3">
    <location>
        <position position="1915"/>
    </location>
</feature>
<feature type="modified residue" description="Phosphotyrosine" evidence="3">
    <location>
        <position position="1916"/>
    </location>
</feature>
<feature type="modified residue" description="Phosphoserine" evidence="3">
    <location>
        <position position="1917"/>
    </location>
</feature>
<feature type="modified residue" description="Phosphothreonine" evidence="3">
    <location>
        <position position="1919"/>
    </location>
</feature>
<feature type="modified residue" description="Phosphoserine" evidence="3">
    <location>
        <position position="1920"/>
    </location>
</feature>
<feature type="modified residue" description="N6,N6-dimethyllysine; alternate" evidence="2">
    <location>
        <position position="1922"/>
    </location>
</feature>
<feature type="modified residue" description="N6-acetyllysine; alternate" evidence="3">
    <location>
        <position position="1922"/>
    </location>
</feature>
<feature type="modified residue" description="N6-methyllysine; alternate" evidence="3">
    <location>
        <position position="1922"/>
    </location>
</feature>
<feature type="modified residue" description="Phosphotyrosine" evidence="3">
    <location>
        <position position="1923"/>
    </location>
</feature>
<feature type="modified residue" description="Phosphothreonine" evidence="3">
    <location>
        <position position="1926"/>
    </location>
</feature>
<feature type="modified residue" description="Phosphoserine" evidence="3">
    <location>
        <position position="1927"/>
    </location>
</feature>
<feature type="modified residue" description="Phosphothreonine" evidence="3">
    <location>
        <position position="1929"/>
    </location>
</feature>
<feature type="modified residue" description="Phosphotyrosine" evidence="3">
    <location>
        <position position="1930"/>
    </location>
</feature>
<feature type="modified residue" description="Phosphoserine" evidence="3">
    <location>
        <position position="1931"/>
    </location>
</feature>
<feature type="modified residue" description="Phosphothreonine" evidence="3">
    <location>
        <position position="1933"/>
    </location>
</feature>
<feature type="modified residue" description="Phosphoserine" evidence="3">
    <location>
        <position position="1934"/>
    </location>
</feature>
<feature type="modified residue" description="N6,N6-dimethyllysine; alternate" evidence="2">
    <location>
        <position position="1936"/>
    </location>
</feature>
<feature type="modified residue" description="N6-acetyllysine; alternate" evidence="3">
    <location>
        <position position="1936"/>
    </location>
</feature>
<feature type="modified residue" description="N6-methyllysine; alternate" evidence="3">
    <location>
        <position position="1936"/>
    </location>
</feature>
<feature type="cross-link" description="Glycyl lysine isopeptide (Lys-Gly) (interchain with G-Cter in ubiquitin); by NEDD4" evidence="3">
    <location>
        <position position="1268"/>
    </location>
</feature>
<feature type="strand" evidence="15">
    <location>
        <begin position="20"/>
        <end position="22"/>
    </location>
</feature>
<feature type="helix" evidence="15">
    <location>
        <begin position="28"/>
        <end position="34"/>
    </location>
</feature>
<feature type="strand" evidence="15">
    <location>
        <begin position="36"/>
        <end position="39"/>
    </location>
</feature>
<feature type="strand" evidence="15">
    <location>
        <begin position="46"/>
        <end position="52"/>
    </location>
</feature>
<feature type="strand" evidence="15">
    <location>
        <begin position="56"/>
        <end position="58"/>
    </location>
</feature>
<feature type="turn" evidence="15">
    <location>
        <begin position="60"/>
        <end position="62"/>
    </location>
</feature>
<feature type="turn" evidence="15">
    <location>
        <begin position="66"/>
        <end position="68"/>
    </location>
</feature>
<feature type="turn" evidence="15">
    <location>
        <begin position="77"/>
        <end position="80"/>
    </location>
</feature>
<feature type="strand" evidence="15">
    <location>
        <begin position="86"/>
        <end position="95"/>
    </location>
</feature>
<feature type="turn" evidence="15">
    <location>
        <begin position="97"/>
        <end position="99"/>
    </location>
</feature>
<feature type="helix" evidence="15">
    <location>
        <begin position="100"/>
        <end position="109"/>
    </location>
</feature>
<feature type="turn" evidence="15">
    <location>
        <begin position="112"/>
        <end position="114"/>
    </location>
</feature>
<feature type="strand" evidence="15">
    <location>
        <begin position="116"/>
        <end position="119"/>
    </location>
</feature>
<feature type="helix" evidence="15">
    <location>
        <begin position="124"/>
        <end position="132"/>
    </location>
</feature>
<feature type="helix" evidence="15">
    <location>
        <begin position="137"/>
        <end position="148"/>
    </location>
</feature>
<feature type="strand" evidence="15">
    <location>
        <begin position="190"/>
        <end position="194"/>
    </location>
</feature>
<feature type="strand" evidence="15">
    <location>
        <begin position="197"/>
        <end position="201"/>
    </location>
</feature>
<feature type="strand" evidence="15">
    <location>
        <begin position="213"/>
        <end position="216"/>
    </location>
</feature>
<feature type="helix" evidence="15">
    <location>
        <begin position="218"/>
        <end position="226"/>
    </location>
</feature>
<feature type="helix" evidence="15">
    <location>
        <begin position="230"/>
        <end position="235"/>
    </location>
</feature>
<feature type="turn" evidence="15">
    <location>
        <begin position="240"/>
        <end position="242"/>
    </location>
</feature>
<feature type="helix" evidence="15">
    <location>
        <begin position="245"/>
        <end position="248"/>
    </location>
</feature>
<feature type="strand" evidence="15">
    <location>
        <begin position="249"/>
        <end position="255"/>
    </location>
</feature>
<feature type="turn" evidence="15">
    <location>
        <begin position="258"/>
        <end position="260"/>
    </location>
</feature>
<feature type="strand" evidence="15">
    <location>
        <begin position="264"/>
        <end position="266"/>
    </location>
</feature>
<feature type="turn" evidence="15">
    <location>
        <begin position="267"/>
        <end position="269"/>
    </location>
</feature>
<feature type="strand" evidence="15">
    <location>
        <begin position="270"/>
        <end position="272"/>
    </location>
</feature>
<feature type="helix" evidence="15">
    <location>
        <begin position="275"/>
        <end position="296"/>
    </location>
</feature>
<feature type="helix" evidence="15">
    <location>
        <begin position="301"/>
        <end position="318"/>
    </location>
</feature>
<feature type="strand" evidence="15">
    <location>
        <begin position="329"/>
        <end position="331"/>
    </location>
</feature>
<feature type="helix" evidence="15">
    <location>
        <begin position="339"/>
        <end position="343"/>
    </location>
</feature>
<feature type="helix" evidence="15">
    <location>
        <begin position="349"/>
        <end position="353"/>
    </location>
</feature>
<feature type="strand" evidence="15">
    <location>
        <begin position="356"/>
        <end position="358"/>
    </location>
</feature>
<feature type="strand" evidence="15">
    <location>
        <begin position="360"/>
        <end position="369"/>
    </location>
</feature>
<feature type="strand" evidence="15">
    <location>
        <begin position="375"/>
        <end position="380"/>
    </location>
</feature>
<feature type="helix" evidence="15">
    <location>
        <begin position="384"/>
        <end position="387"/>
    </location>
</feature>
<feature type="strand" evidence="15">
    <location>
        <begin position="389"/>
        <end position="393"/>
    </location>
</feature>
<feature type="turn" evidence="15">
    <location>
        <begin position="396"/>
        <end position="398"/>
    </location>
</feature>
<feature type="helix" evidence="15">
    <location>
        <begin position="399"/>
        <end position="408"/>
    </location>
</feature>
<feature type="turn" evidence="15">
    <location>
        <begin position="409"/>
        <end position="411"/>
    </location>
</feature>
<feature type="strand" evidence="15">
    <location>
        <begin position="412"/>
        <end position="420"/>
    </location>
</feature>
<feature type="strand" evidence="15">
    <location>
        <begin position="426"/>
        <end position="432"/>
    </location>
</feature>
<feature type="helix" evidence="15">
    <location>
        <begin position="436"/>
        <end position="438"/>
    </location>
</feature>
<feature type="strand" evidence="15">
    <location>
        <begin position="445"/>
        <end position="449"/>
    </location>
</feature>
<feature type="strand" evidence="15">
    <location>
        <begin position="455"/>
        <end position="459"/>
    </location>
</feature>
<feature type="helix" evidence="15">
    <location>
        <begin position="466"/>
        <end position="468"/>
    </location>
</feature>
<feature type="strand" evidence="15">
    <location>
        <begin position="469"/>
        <end position="476"/>
    </location>
</feature>
<feature type="strand" evidence="15">
    <location>
        <begin position="478"/>
        <end position="480"/>
    </location>
</feature>
<feature type="strand" evidence="15">
    <location>
        <begin position="482"/>
        <end position="484"/>
    </location>
</feature>
<feature type="helix" evidence="15">
    <location>
        <begin position="486"/>
        <end position="488"/>
    </location>
</feature>
<feature type="helix" evidence="15">
    <location>
        <begin position="489"/>
        <end position="492"/>
    </location>
</feature>
<feature type="strand" evidence="15">
    <location>
        <begin position="496"/>
        <end position="498"/>
    </location>
</feature>
<feature type="strand" evidence="15">
    <location>
        <begin position="500"/>
        <end position="504"/>
    </location>
</feature>
<feature type="helix" evidence="15">
    <location>
        <begin position="509"/>
        <end position="517"/>
    </location>
</feature>
<feature type="helix" evidence="15">
    <location>
        <begin position="522"/>
        <end position="524"/>
    </location>
</feature>
<feature type="turn" evidence="15">
    <location>
        <begin position="528"/>
        <end position="530"/>
    </location>
</feature>
<feature type="strand" evidence="15">
    <location>
        <begin position="531"/>
        <end position="534"/>
    </location>
</feature>
<feature type="helix" evidence="15">
    <location>
        <begin position="540"/>
        <end position="549"/>
    </location>
</feature>
<feature type="helix" evidence="15">
    <location>
        <begin position="557"/>
        <end position="565"/>
    </location>
</feature>
<feature type="strand" evidence="15">
    <location>
        <begin position="578"/>
        <end position="583"/>
    </location>
</feature>
<feature type="strand" evidence="15">
    <location>
        <begin position="585"/>
        <end position="587"/>
    </location>
</feature>
<feature type="helix" evidence="15">
    <location>
        <begin position="588"/>
        <end position="595"/>
    </location>
</feature>
<feature type="turn" evidence="15">
    <location>
        <begin position="613"/>
        <end position="615"/>
    </location>
</feature>
<feature type="turn" evidence="15">
    <location>
        <begin position="619"/>
        <end position="621"/>
    </location>
</feature>
<feature type="strand" evidence="15">
    <location>
        <begin position="627"/>
        <end position="631"/>
    </location>
</feature>
<feature type="strand" evidence="15">
    <location>
        <begin position="634"/>
        <end position="638"/>
    </location>
</feature>
<feature type="turn" evidence="15">
    <location>
        <begin position="642"/>
        <end position="644"/>
    </location>
</feature>
<feature type="strand" evidence="15">
    <location>
        <begin position="645"/>
        <end position="648"/>
    </location>
</feature>
<feature type="helix" evidence="15">
    <location>
        <begin position="652"/>
        <end position="659"/>
    </location>
</feature>
<feature type="helix" evidence="15">
    <location>
        <begin position="662"/>
        <end position="683"/>
    </location>
</feature>
<feature type="helix" evidence="15">
    <location>
        <begin position="689"/>
        <end position="692"/>
    </location>
</feature>
<feature type="helix" evidence="15">
    <location>
        <begin position="696"/>
        <end position="721"/>
    </location>
</feature>
<feature type="helix" evidence="15">
    <location>
        <begin position="733"/>
        <end position="758"/>
    </location>
</feature>
<feature type="helix" evidence="15">
    <location>
        <begin position="765"/>
        <end position="771"/>
    </location>
</feature>
<feature type="helix" evidence="15">
    <location>
        <begin position="778"/>
        <end position="785"/>
    </location>
</feature>
<feature type="strand" evidence="15">
    <location>
        <begin position="801"/>
        <end position="810"/>
    </location>
</feature>
<feature type="turn" evidence="15">
    <location>
        <begin position="817"/>
        <end position="821"/>
    </location>
</feature>
<feature type="turn" evidence="15">
    <location>
        <begin position="827"/>
        <end position="829"/>
    </location>
</feature>
<feature type="helix" evidence="15">
    <location>
        <begin position="833"/>
        <end position="868"/>
    </location>
</feature>
<feature type="strand" evidence="15">
    <location>
        <begin position="886"/>
        <end position="890"/>
    </location>
</feature>
<feature type="turn" evidence="15">
    <location>
        <begin position="891"/>
        <end position="895"/>
    </location>
</feature>
<feature type="strand" evidence="15">
    <location>
        <begin position="898"/>
        <end position="900"/>
    </location>
</feature>
<feature type="strand" evidence="15">
    <location>
        <begin position="902"/>
        <end position="905"/>
    </location>
</feature>
<feature type="strand" evidence="15">
    <location>
        <begin position="907"/>
        <end position="911"/>
    </location>
</feature>
<feature type="helix" evidence="15">
    <location>
        <begin position="913"/>
        <end position="920"/>
    </location>
</feature>
<feature type="strand" evidence="15">
    <location>
        <begin position="925"/>
        <end position="927"/>
    </location>
</feature>
<feature type="helix" evidence="15">
    <location>
        <begin position="928"/>
        <end position="933"/>
    </location>
</feature>
<feature type="helix" evidence="15">
    <location>
        <begin position="936"/>
        <end position="944"/>
    </location>
</feature>
<feature type="helix" evidence="15">
    <location>
        <begin position="946"/>
        <end position="969"/>
    </location>
</feature>
<feature type="helix" evidence="15">
    <location>
        <begin position="971"/>
        <end position="973"/>
    </location>
</feature>
<feature type="strand" evidence="15">
    <location>
        <begin position="976"/>
        <end position="981"/>
    </location>
</feature>
<feature type="helix" evidence="15">
    <location>
        <begin position="983"/>
        <end position="993"/>
    </location>
</feature>
<feature type="helix" evidence="15">
    <location>
        <begin position="1006"/>
        <end position="1017"/>
    </location>
</feature>
<feature type="helix" evidence="15">
    <location>
        <begin position="1028"/>
        <end position="1048"/>
    </location>
</feature>
<feature type="helix" evidence="15">
    <location>
        <begin position="1051"/>
        <end position="1056"/>
    </location>
</feature>
<feature type="helix" evidence="15">
    <location>
        <begin position="1062"/>
        <end position="1079"/>
    </location>
</feature>
<feature type="helix" evidence="15">
    <location>
        <begin position="1087"/>
        <end position="1096"/>
    </location>
</feature>
<feature type="helix" evidence="15">
    <location>
        <begin position="1098"/>
        <end position="1101"/>
    </location>
</feature>
<feature type="turn" evidence="15">
    <location>
        <begin position="1102"/>
        <end position="1105"/>
    </location>
</feature>
<feature type="helix" evidence="15">
    <location>
        <begin position="1121"/>
        <end position="1129"/>
    </location>
</feature>
<feature type="strand" evidence="15">
    <location>
        <begin position="1138"/>
        <end position="1141"/>
    </location>
</feature>
<feature type="helix" evidence="15">
    <location>
        <begin position="1146"/>
        <end position="1149"/>
    </location>
</feature>
<feature type="helix" evidence="15">
    <location>
        <begin position="1151"/>
        <end position="1160"/>
    </location>
</feature>
<feature type="turn" evidence="15">
    <location>
        <begin position="1166"/>
        <end position="1169"/>
    </location>
</feature>
<feature type="strand" evidence="15">
    <location>
        <begin position="1170"/>
        <end position="1177"/>
    </location>
</feature>
<feature type="turn" evidence="15">
    <location>
        <begin position="1181"/>
        <end position="1183"/>
    </location>
</feature>
<feature type="strand" evidence="15">
    <location>
        <begin position="1186"/>
        <end position="1188"/>
    </location>
</feature>
<feature type="helix" evidence="15">
    <location>
        <begin position="1190"/>
        <end position="1198"/>
    </location>
</feature>
<feature type="strand" evidence="15">
    <location>
        <begin position="1209"/>
        <end position="1216"/>
    </location>
</feature>
<feature type="helix" evidence="15">
    <location>
        <begin position="1218"/>
        <end position="1223"/>
    </location>
</feature>
<feature type="helix" evidence="15">
    <location>
        <begin position="1228"/>
        <end position="1239"/>
    </location>
</feature>
<feature type="helix" evidence="15">
    <location>
        <begin position="1240"/>
        <end position="1242"/>
    </location>
</feature>
<feature type="strand" evidence="15">
    <location>
        <begin position="1243"/>
        <end position="1247"/>
    </location>
</feature>
<feature type="strand" evidence="15">
    <location>
        <begin position="1252"/>
        <end position="1261"/>
    </location>
</feature>
<feature type="helix" evidence="15">
    <location>
        <begin position="1263"/>
        <end position="1266"/>
    </location>
</feature>
<feature type="helix" evidence="15">
    <location>
        <begin position="1282"/>
        <end position="1295"/>
    </location>
</feature>
<feature type="strand" evidence="15">
    <location>
        <begin position="1306"/>
        <end position="1310"/>
    </location>
</feature>
<feature type="turn" evidence="15">
    <location>
        <begin position="1315"/>
        <end position="1317"/>
    </location>
</feature>
<feature type="strand" evidence="15">
    <location>
        <begin position="1318"/>
        <end position="1322"/>
    </location>
</feature>
<feature type="strand" evidence="15">
    <location>
        <begin position="1328"/>
        <end position="1331"/>
    </location>
</feature>
<feature type="strand" evidence="15">
    <location>
        <begin position="1335"/>
        <end position="1340"/>
    </location>
</feature>
<feature type="helix" evidence="15">
    <location>
        <begin position="1343"/>
        <end position="1348"/>
    </location>
</feature>
<feature type="turn" evidence="15">
    <location>
        <begin position="1354"/>
        <end position="1356"/>
    </location>
</feature>
<feature type="strand" evidence="15">
    <location>
        <begin position="1358"/>
        <end position="1360"/>
    </location>
</feature>
<feature type="helix" evidence="15">
    <location>
        <begin position="1363"/>
        <end position="1369"/>
    </location>
</feature>
<feature type="helix" evidence="15">
    <location>
        <begin position="1371"/>
        <end position="1388"/>
    </location>
</feature>
<feature type="helix" evidence="15">
    <location>
        <begin position="1395"/>
        <end position="1406"/>
    </location>
</feature>
<feature type="helix" evidence="15">
    <location>
        <begin position="1416"/>
        <end position="1421"/>
    </location>
</feature>
<feature type="helix" evidence="15">
    <location>
        <begin position="1426"/>
        <end position="1430"/>
    </location>
</feature>
<feature type="turn" evidence="15">
    <location>
        <begin position="1431"/>
        <end position="1435"/>
    </location>
</feature>
<feature type="helix" evidence="15">
    <location>
        <begin position="1436"/>
        <end position="1444"/>
    </location>
</feature>
<feature type="helix" evidence="15">
    <location>
        <begin position="1454"/>
        <end position="1459"/>
    </location>
</feature>
<feature type="turn" evidence="15">
    <location>
        <begin position="1467"/>
        <end position="1469"/>
    </location>
</feature>
<feature type="strand" evidence="15">
    <location>
        <begin position="1470"/>
        <end position="1475"/>
    </location>
</feature>
<feature type="helix" evidence="15">
    <location>
        <begin position="1479"/>
        <end position="1481"/>
    </location>
</feature>